<accession>P34536</accession>
<name>YNC3_CAEEL</name>
<organism>
    <name type="scientific">Caenorhabditis elegans</name>
    <dbReference type="NCBI Taxonomy" id="6239"/>
    <lineage>
        <taxon>Eukaryota</taxon>
        <taxon>Metazoa</taxon>
        <taxon>Ecdysozoa</taxon>
        <taxon>Nematoda</taxon>
        <taxon>Chromadorea</taxon>
        <taxon>Rhabditida</taxon>
        <taxon>Rhabditina</taxon>
        <taxon>Rhabditomorpha</taxon>
        <taxon>Rhabditoidea</taxon>
        <taxon>Rhabditidae</taxon>
        <taxon>Peloderinae</taxon>
        <taxon>Caenorhabditis</taxon>
    </lineage>
</organism>
<proteinExistence type="predicted"/>
<keyword id="KW-0238">DNA-binding</keyword>
<keyword id="KW-0479">Metal-binding</keyword>
<keyword id="KW-0539">Nucleus</keyword>
<keyword id="KW-1185">Reference proteome</keyword>
<keyword id="KW-0677">Repeat</keyword>
<keyword id="KW-0862">Zinc</keyword>
<keyword id="KW-0863">Zinc-finger</keyword>
<reference key="1">
    <citation type="journal article" date="1994" name="Nature">
        <title>2.2 Mb of contiguous nucleotide sequence from chromosome III of C. elegans.</title>
        <authorList>
            <person name="Wilson R."/>
            <person name="Ainscough R."/>
            <person name="Anderson K."/>
            <person name="Baynes C."/>
            <person name="Berks M."/>
            <person name="Bonfield J."/>
            <person name="Burton J."/>
            <person name="Connell M."/>
            <person name="Copsey T."/>
            <person name="Cooper J."/>
            <person name="Coulson A."/>
            <person name="Craxton M."/>
            <person name="Dear S."/>
            <person name="Du Z."/>
            <person name="Durbin R."/>
            <person name="Favello A."/>
            <person name="Fraser A."/>
            <person name="Fulton L."/>
            <person name="Gardner A."/>
            <person name="Green P."/>
            <person name="Hawkins T."/>
            <person name="Hillier L."/>
            <person name="Jier M."/>
            <person name="Johnston L."/>
            <person name="Jones M."/>
            <person name="Kershaw J."/>
            <person name="Kirsten J."/>
            <person name="Laisster N."/>
            <person name="Latreille P."/>
            <person name="Lightning J."/>
            <person name="Lloyd C."/>
            <person name="Mortimore B."/>
            <person name="O'Callaghan M."/>
            <person name="Parsons J."/>
            <person name="Percy C."/>
            <person name="Rifken L."/>
            <person name="Roopra A."/>
            <person name="Saunders D."/>
            <person name="Shownkeen R."/>
            <person name="Sims M."/>
            <person name="Smaldon N."/>
            <person name="Smith A."/>
            <person name="Smith M."/>
            <person name="Sonnhammer E."/>
            <person name="Staden R."/>
            <person name="Sulston J."/>
            <person name="Thierry-Mieg J."/>
            <person name="Thomas K."/>
            <person name="Vaudin M."/>
            <person name="Vaughan K."/>
            <person name="Waterston R."/>
            <person name="Watson A."/>
            <person name="Weinstock L."/>
            <person name="Wilkinson-Sproat J."/>
            <person name="Wohldman P."/>
        </authorList>
    </citation>
    <scope>NUCLEOTIDE SEQUENCE [LARGE SCALE GENOMIC DNA]</scope>
    <source>
        <strain>Bristol N2</strain>
    </source>
</reference>
<reference key="2">
    <citation type="journal article" date="1998" name="Science">
        <title>Genome sequence of the nematode C. elegans: a platform for investigating biology.</title>
        <authorList>
            <consortium name="The C. elegans sequencing consortium"/>
        </authorList>
    </citation>
    <scope>NUCLEOTIDE SEQUENCE [LARGE SCALE GENOMIC DNA]</scope>
    <source>
        <strain>Bristol N2</strain>
    </source>
</reference>
<protein>
    <recommendedName>
        <fullName>Putative zinc finger protein R05D3.3</fullName>
    </recommendedName>
</protein>
<sequence length="421" mass="46587">MESPNMRKRLIEMESSLEVKKTATTVKQEPLETSSPLLASMISTAPNPPPTSPHALNYLTLLAAFRQFLHGYIQAGGDENLANTLGNYVAALPMPPNSLNPIGPLNAPKSPFKQQQKFHSIIKAVKREPVSEPAQNAGSGDSSVTLSSALGEDAVPQNRGSCTSMKPVPRFVMLPVVAAQSASPSASGPTSEIQQLREAAFGRYKNVLCVICNEWICSRNRKNHIEAHLNYRPYKCSACSYARRREIFVDQHIRTQHKGVEGVVMLSDVDLHVAMEVDRLAEECVTRTRKIIDTMQEKKDGDFGENKDFDEKALQMMLAEEAENKVVVIESVSQVRPKVANYHRRQRTKVLKKIYDTDVAKQTELKIVKDEEGGVPTMSIKLEEGFEINLEDLMKMVGAGSSITDSNEPGPSEIKKELAEV</sequence>
<comment type="subcellular location">
    <subcellularLocation>
        <location evidence="2">Nucleus</location>
    </subcellularLocation>
</comment>
<dbReference type="EMBL" id="FO081667">
    <property type="protein sequence ID" value="CCD73189.1"/>
    <property type="molecule type" value="Genomic_DNA"/>
</dbReference>
<dbReference type="PIR" id="S44864">
    <property type="entry name" value="S44864"/>
</dbReference>
<dbReference type="RefSeq" id="NP_001380030.1">
    <property type="nucleotide sequence ID" value="NM_001392155.1"/>
</dbReference>
<dbReference type="RefSeq" id="NP_498846.1">
    <property type="nucleotide sequence ID" value="NM_066445.3"/>
</dbReference>
<dbReference type="FunCoup" id="P34536">
    <property type="interactions" value="344"/>
</dbReference>
<dbReference type="STRING" id="6239.R05D3.3.1"/>
<dbReference type="PaxDb" id="6239-R05D3.3.1"/>
<dbReference type="EnsemblMetazoa" id="R05D3.3.1">
    <property type="protein sequence ID" value="R05D3.3.1"/>
    <property type="gene ID" value="WBGene00019878"/>
</dbReference>
<dbReference type="EnsemblMetazoa" id="R05D3.3.2">
    <property type="protein sequence ID" value="R05D3.3.2"/>
    <property type="gene ID" value="WBGene00019878"/>
</dbReference>
<dbReference type="EnsemblMetazoa" id="R05D3.3.3">
    <property type="protein sequence ID" value="R05D3.3.3"/>
    <property type="gene ID" value="WBGene00019878"/>
</dbReference>
<dbReference type="EnsemblMetazoa" id="R05D3.3.4">
    <property type="protein sequence ID" value="R05D3.3.4"/>
    <property type="gene ID" value="WBGene00019878"/>
</dbReference>
<dbReference type="GeneID" id="187601"/>
<dbReference type="UCSC" id="R05D3.3">
    <property type="organism name" value="c. elegans"/>
</dbReference>
<dbReference type="AGR" id="WB:WBGene00019878"/>
<dbReference type="WormBase" id="R05D3.3">
    <property type="protein sequence ID" value="CE00282"/>
    <property type="gene ID" value="WBGene00019878"/>
</dbReference>
<dbReference type="eggNOG" id="ENOG502S9JU">
    <property type="taxonomic scope" value="Eukaryota"/>
</dbReference>
<dbReference type="HOGENOM" id="CLU_652542_0_0_1"/>
<dbReference type="InParanoid" id="P34536"/>
<dbReference type="OMA" id="ICNEWIC"/>
<dbReference type="OrthoDB" id="5920133at2759"/>
<dbReference type="PRO" id="PR:P34536"/>
<dbReference type="Proteomes" id="UP000001940">
    <property type="component" value="Chromosome III"/>
</dbReference>
<dbReference type="Bgee" id="WBGene00019878">
    <property type="expression patterns" value="Expressed in germ line (C elegans) and 4 other cell types or tissues"/>
</dbReference>
<dbReference type="GO" id="GO:0005634">
    <property type="term" value="C:nucleus"/>
    <property type="evidence" value="ECO:0007669"/>
    <property type="project" value="UniProtKB-SubCell"/>
</dbReference>
<dbReference type="GO" id="GO:0003677">
    <property type="term" value="F:DNA binding"/>
    <property type="evidence" value="ECO:0007669"/>
    <property type="project" value="UniProtKB-KW"/>
</dbReference>
<dbReference type="GO" id="GO:0008270">
    <property type="term" value="F:zinc ion binding"/>
    <property type="evidence" value="ECO:0007669"/>
    <property type="project" value="UniProtKB-KW"/>
</dbReference>
<dbReference type="Gene3D" id="3.30.160.60">
    <property type="entry name" value="Classic Zinc Finger"/>
    <property type="match status" value="1"/>
</dbReference>
<feature type="chain" id="PRO_0000046905" description="Putative zinc finger protein R05D3.3">
    <location>
        <begin position="1"/>
        <end position="421"/>
    </location>
</feature>
<feature type="zinc finger region" description="C2H2-type 1">
    <location>
        <begin position="207"/>
        <end position="228"/>
    </location>
</feature>
<feature type="zinc finger region" description="C2H2-type 2">
    <location>
        <begin position="234"/>
        <end position="257"/>
    </location>
</feature>
<feature type="region of interest" description="Disordered" evidence="1">
    <location>
        <begin position="400"/>
        <end position="421"/>
    </location>
</feature>
<evidence type="ECO:0000256" key="1">
    <source>
        <dbReference type="SAM" id="MobiDB-lite"/>
    </source>
</evidence>
<evidence type="ECO:0000305" key="2"/>
<gene>
    <name type="ORF">R05D3.3</name>
</gene>